<feature type="chain" id="PRO_1000120640" description="Small ribosomal subunit protein bS21">
    <location>
        <begin position="1"/>
        <end position="57"/>
    </location>
</feature>
<feature type="region of interest" description="Disordered" evidence="2">
    <location>
        <begin position="22"/>
        <end position="57"/>
    </location>
</feature>
<feature type="compositionally biased region" description="Basic residues" evidence="2">
    <location>
        <begin position="33"/>
        <end position="57"/>
    </location>
</feature>
<comment type="similarity">
    <text evidence="1">Belongs to the bacterial ribosomal protein bS21 family.</text>
</comment>
<gene>
    <name evidence="1" type="primary">rpsU</name>
    <name type="ordered locus">Nther_1191</name>
</gene>
<organism>
    <name type="scientific">Natranaerobius thermophilus (strain ATCC BAA-1301 / DSM 18059 / JW/NM-WN-LF)</name>
    <dbReference type="NCBI Taxonomy" id="457570"/>
    <lineage>
        <taxon>Bacteria</taxon>
        <taxon>Bacillati</taxon>
        <taxon>Bacillota</taxon>
        <taxon>Clostridia</taxon>
        <taxon>Natranaerobiales</taxon>
        <taxon>Natranaerobiaceae</taxon>
        <taxon>Natranaerobius</taxon>
    </lineage>
</organism>
<keyword id="KW-1185">Reference proteome</keyword>
<keyword id="KW-0687">Ribonucleoprotein</keyword>
<keyword id="KW-0689">Ribosomal protein</keyword>
<proteinExistence type="inferred from homology"/>
<sequence>MAEIKVGKNETLDSALRRFKKQCSKSGVLSEAKKRKHYEKPSEKRKRKATEKRNSRK</sequence>
<reference key="1">
    <citation type="submission" date="2008-04" db="EMBL/GenBank/DDBJ databases">
        <title>Complete sequence of chromosome of Natranaerobius thermophilus JW/NM-WN-LF.</title>
        <authorList>
            <consortium name="US DOE Joint Genome Institute"/>
            <person name="Copeland A."/>
            <person name="Lucas S."/>
            <person name="Lapidus A."/>
            <person name="Glavina del Rio T."/>
            <person name="Dalin E."/>
            <person name="Tice H."/>
            <person name="Bruce D."/>
            <person name="Goodwin L."/>
            <person name="Pitluck S."/>
            <person name="Chertkov O."/>
            <person name="Brettin T."/>
            <person name="Detter J.C."/>
            <person name="Han C."/>
            <person name="Kuske C.R."/>
            <person name="Schmutz J."/>
            <person name="Larimer F."/>
            <person name="Land M."/>
            <person name="Hauser L."/>
            <person name="Kyrpides N."/>
            <person name="Lykidis A."/>
            <person name="Mesbah N.M."/>
            <person name="Wiegel J."/>
        </authorList>
    </citation>
    <scope>NUCLEOTIDE SEQUENCE [LARGE SCALE GENOMIC DNA]</scope>
    <source>
        <strain>ATCC BAA-1301 / DSM 18059 / JW/NM-WN-LF</strain>
    </source>
</reference>
<protein>
    <recommendedName>
        <fullName evidence="1">Small ribosomal subunit protein bS21</fullName>
    </recommendedName>
    <alternativeName>
        <fullName evidence="3">30S ribosomal protein S21</fullName>
    </alternativeName>
</protein>
<accession>B2A1N7</accession>
<dbReference type="EMBL" id="CP001034">
    <property type="protein sequence ID" value="ACB84774.1"/>
    <property type="molecule type" value="Genomic_DNA"/>
</dbReference>
<dbReference type="RefSeq" id="WP_012447649.1">
    <property type="nucleotide sequence ID" value="NC_010718.1"/>
</dbReference>
<dbReference type="SMR" id="B2A1N7"/>
<dbReference type="FunCoup" id="B2A1N7">
    <property type="interactions" value="244"/>
</dbReference>
<dbReference type="STRING" id="457570.Nther_1191"/>
<dbReference type="KEGG" id="nth:Nther_1191"/>
<dbReference type="eggNOG" id="COG0828">
    <property type="taxonomic scope" value="Bacteria"/>
</dbReference>
<dbReference type="HOGENOM" id="CLU_159258_3_1_9"/>
<dbReference type="InParanoid" id="B2A1N7"/>
<dbReference type="OrthoDB" id="9799244at2"/>
<dbReference type="Proteomes" id="UP000001683">
    <property type="component" value="Chromosome"/>
</dbReference>
<dbReference type="GO" id="GO:1990904">
    <property type="term" value="C:ribonucleoprotein complex"/>
    <property type="evidence" value="ECO:0007669"/>
    <property type="project" value="UniProtKB-KW"/>
</dbReference>
<dbReference type="GO" id="GO:0005840">
    <property type="term" value="C:ribosome"/>
    <property type="evidence" value="ECO:0007669"/>
    <property type="project" value="UniProtKB-KW"/>
</dbReference>
<dbReference type="GO" id="GO:0003735">
    <property type="term" value="F:structural constituent of ribosome"/>
    <property type="evidence" value="ECO:0007669"/>
    <property type="project" value="InterPro"/>
</dbReference>
<dbReference type="GO" id="GO:0006412">
    <property type="term" value="P:translation"/>
    <property type="evidence" value="ECO:0007669"/>
    <property type="project" value="UniProtKB-UniRule"/>
</dbReference>
<dbReference type="Gene3D" id="1.20.5.1150">
    <property type="entry name" value="Ribosomal protein S8"/>
    <property type="match status" value="1"/>
</dbReference>
<dbReference type="HAMAP" id="MF_00358">
    <property type="entry name" value="Ribosomal_bS21"/>
    <property type="match status" value="1"/>
</dbReference>
<dbReference type="InterPro" id="IPR001911">
    <property type="entry name" value="Ribosomal_bS21"/>
</dbReference>
<dbReference type="InterPro" id="IPR018278">
    <property type="entry name" value="Ribosomal_bS21_CS"/>
</dbReference>
<dbReference type="InterPro" id="IPR038380">
    <property type="entry name" value="Ribosomal_bS21_sf"/>
</dbReference>
<dbReference type="NCBIfam" id="TIGR00030">
    <property type="entry name" value="S21p"/>
    <property type="match status" value="1"/>
</dbReference>
<dbReference type="PANTHER" id="PTHR21109">
    <property type="entry name" value="MITOCHONDRIAL 28S RIBOSOMAL PROTEIN S21"/>
    <property type="match status" value="1"/>
</dbReference>
<dbReference type="PANTHER" id="PTHR21109:SF22">
    <property type="entry name" value="SMALL RIBOSOMAL SUBUNIT PROTEIN BS21"/>
    <property type="match status" value="1"/>
</dbReference>
<dbReference type="Pfam" id="PF01165">
    <property type="entry name" value="Ribosomal_S21"/>
    <property type="match status" value="1"/>
</dbReference>
<dbReference type="PRINTS" id="PR00976">
    <property type="entry name" value="RIBOSOMALS21"/>
</dbReference>
<dbReference type="PROSITE" id="PS01181">
    <property type="entry name" value="RIBOSOMAL_S21"/>
    <property type="match status" value="1"/>
</dbReference>
<evidence type="ECO:0000255" key="1">
    <source>
        <dbReference type="HAMAP-Rule" id="MF_00358"/>
    </source>
</evidence>
<evidence type="ECO:0000256" key="2">
    <source>
        <dbReference type="SAM" id="MobiDB-lite"/>
    </source>
</evidence>
<evidence type="ECO:0000305" key="3"/>
<name>RS21_NATTJ</name>